<sequence length="54" mass="6460">MLLCFHMCQRIMWLPFDLMKWRRFHCGAVLVGTLSLRNRSPKILSLYFISDRTG</sequence>
<name>YB200_YEAST</name>
<gene>
    <name type="ordered locus">YBR200W-A</name>
</gene>
<dbReference type="EMBL" id="Z36070">
    <property type="status" value="NOT_ANNOTATED_CDS"/>
    <property type="molecule type" value="Genomic_DNA"/>
</dbReference>
<dbReference type="EMBL" id="BK006936">
    <property type="protein sequence ID" value="DAA07317.1"/>
    <property type="molecule type" value="Genomic_DNA"/>
</dbReference>
<dbReference type="RefSeq" id="NP_878053.1">
    <property type="nucleotide sequence ID" value="NM_001184542.1"/>
</dbReference>
<dbReference type="BioGRID" id="36991">
    <property type="interactions" value="30"/>
</dbReference>
<dbReference type="FunCoup" id="Q3E755">
    <property type="interactions" value="4"/>
</dbReference>
<dbReference type="STRING" id="4932.YBR200W-A"/>
<dbReference type="PaxDb" id="4932-YBR200W-A"/>
<dbReference type="EnsemblFungi" id="YBR200W-A_mRNA">
    <property type="protein sequence ID" value="YBR200W-A"/>
    <property type="gene ID" value="YBR200W-A"/>
</dbReference>
<dbReference type="GeneID" id="1466449"/>
<dbReference type="KEGG" id="sce:YBR200W-A"/>
<dbReference type="AGR" id="SGD:S000028535"/>
<dbReference type="SGD" id="S000028535">
    <property type="gene designation" value="YBR200W-A"/>
</dbReference>
<dbReference type="VEuPathDB" id="FungiDB:YBR200W-A"/>
<dbReference type="HOGENOM" id="CLU_3051679_0_0_1"/>
<dbReference type="InParanoid" id="Q3E755"/>
<dbReference type="OrthoDB" id="10272070at2759"/>
<dbReference type="BioCyc" id="YEAST:G3O-29260-MONOMER"/>
<dbReference type="BioGRID-ORCS" id="1466449">
    <property type="hits" value="0 hits in 10 CRISPR screens"/>
</dbReference>
<dbReference type="PRO" id="PR:Q3E755"/>
<dbReference type="Proteomes" id="UP000002311">
    <property type="component" value="Chromosome II"/>
</dbReference>
<dbReference type="RNAct" id="Q3E755">
    <property type="molecule type" value="protein"/>
</dbReference>
<dbReference type="GO" id="GO:0005576">
    <property type="term" value="C:extracellular region"/>
    <property type="evidence" value="ECO:0007669"/>
    <property type="project" value="UniProtKB-SubCell"/>
</dbReference>
<proteinExistence type="inferred from homology"/>
<organism>
    <name type="scientific">Saccharomyces cerevisiae (strain ATCC 204508 / S288c)</name>
    <name type="common">Baker's yeast</name>
    <dbReference type="NCBI Taxonomy" id="559292"/>
    <lineage>
        <taxon>Eukaryota</taxon>
        <taxon>Fungi</taxon>
        <taxon>Dikarya</taxon>
        <taxon>Ascomycota</taxon>
        <taxon>Saccharomycotina</taxon>
        <taxon>Saccharomycetes</taxon>
        <taxon>Saccharomycetales</taxon>
        <taxon>Saccharomycetaceae</taxon>
        <taxon>Saccharomyces</taxon>
    </lineage>
</organism>
<accession>Q3E755</accession>
<accession>D6VQJ7</accession>
<feature type="signal peptide" evidence="1">
    <location>
        <begin position="1"/>
        <end position="13"/>
    </location>
</feature>
<feature type="chain" id="PRO_0000248440" description="Uncharacterized protein YBR200W-A">
    <location>
        <begin position="14"/>
        <end position="54"/>
    </location>
</feature>
<evidence type="ECO:0000255" key="1"/>
<evidence type="ECO:0000305" key="2"/>
<reference key="1">
    <citation type="journal article" date="1994" name="EMBO J.">
        <title>Complete DNA sequence of yeast chromosome II.</title>
        <authorList>
            <person name="Feldmann H."/>
            <person name="Aigle M."/>
            <person name="Aljinovic G."/>
            <person name="Andre B."/>
            <person name="Baclet M.C."/>
            <person name="Barthe C."/>
            <person name="Baur A."/>
            <person name="Becam A.-M."/>
            <person name="Biteau N."/>
            <person name="Boles E."/>
            <person name="Brandt T."/>
            <person name="Brendel M."/>
            <person name="Brueckner M."/>
            <person name="Bussereau F."/>
            <person name="Christiansen C."/>
            <person name="Contreras R."/>
            <person name="Crouzet M."/>
            <person name="Cziepluch C."/>
            <person name="Demolis N."/>
            <person name="Delaveau T."/>
            <person name="Doignon F."/>
            <person name="Domdey H."/>
            <person name="Duesterhus S."/>
            <person name="Dubois E."/>
            <person name="Dujon B."/>
            <person name="El Bakkoury M."/>
            <person name="Entian K.-D."/>
            <person name="Feuermann M."/>
            <person name="Fiers W."/>
            <person name="Fobo G.M."/>
            <person name="Fritz C."/>
            <person name="Gassenhuber J."/>
            <person name="Glansdorff N."/>
            <person name="Goffeau A."/>
            <person name="Grivell L.A."/>
            <person name="de Haan M."/>
            <person name="Hein C."/>
            <person name="Herbert C.J."/>
            <person name="Hollenberg C.P."/>
            <person name="Holmstroem K."/>
            <person name="Jacq C."/>
            <person name="Jacquet M."/>
            <person name="Jauniaux J.-C."/>
            <person name="Jonniaux J.-L."/>
            <person name="Kallesoee T."/>
            <person name="Kiesau P."/>
            <person name="Kirchrath L."/>
            <person name="Koetter P."/>
            <person name="Korol S."/>
            <person name="Liebl S."/>
            <person name="Logghe M."/>
            <person name="Lohan A.J.E."/>
            <person name="Louis E.J."/>
            <person name="Li Z.Y."/>
            <person name="Maat M.J."/>
            <person name="Mallet L."/>
            <person name="Mannhaupt G."/>
            <person name="Messenguy F."/>
            <person name="Miosga T."/>
            <person name="Molemans F."/>
            <person name="Mueller S."/>
            <person name="Nasr F."/>
            <person name="Obermaier B."/>
            <person name="Perea J."/>
            <person name="Pierard A."/>
            <person name="Piravandi E."/>
            <person name="Pohl F.M."/>
            <person name="Pohl T.M."/>
            <person name="Potier S."/>
            <person name="Proft M."/>
            <person name="Purnelle B."/>
            <person name="Ramezani Rad M."/>
            <person name="Rieger M."/>
            <person name="Rose M."/>
            <person name="Schaaff-Gerstenschlaeger I."/>
            <person name="Scherens B."/>
            <person name="Schwarzlose C."/>
            <person name="Skala J."/>
            <person name="Slonimski P.P."/>
            <person name="Smits P.H.M."/>
            <person name="Souciet J.-L."/>
            <person name="Steensma H.Y."/>
            <person name="Stucka R."/>
            <person name="Urrestarazu L.A."/>
            <person name="van der Aart Q.J.M."/>
            <person name="Van Dyck L."/>
            <person name="Vassarotti A."/>
            <person name="Vetter I."/>
            <person name="Vierendeels F."/>
            <person name="Vissers S."/>
            <person name="Wagner G."/>
            <person name="de Wergifosse P."/>
            <person name="Wolfe K.H."/>
            <person name="Zagulski M."/>
            <person name="Zimmermann F.K."/>
            <person name="Mewes H.-W."/>
            <person name="Kleine K."/>
        </authorList>
    </citation>
    <scope>NUCLEOTIDE SEQUENCE [LARGE SCALE GENOMIC DNA]</scope>
    <source>
        <strain>ATCC 204508 / S288c</strain>
    </source>
</reference>
<reference key="2">
    <citation type="journal article" date="2014" name="G3 (Bethesda)">
        <title>The reference genome sequence of Saccharomyces cerevisiae: Then and now.</title>
        <authorList>
            <person name="Engel S.R."/>
            <person name="Dietrich F.S."/>
            <person name="Fisk D.G."/>
            <person name="Binkley G."/>
            <person name="Balakrishnan R."/>
            <person name="Costanzo M.C."/>
            <person name="Dwight S.S."/>
            <person name="Hitz B.C."/>
            <person name="Karra K."/>
            <person name="Nash R.S."/>
            <person name="Weng S."/>
            <person name="Wong E.D."/>
            <person name="Lloyd P."/>
            <person name="Skrzypek M.S."/>
            <person name="Miyasato S.R."/>
            <person name="Simison M."/>
            <person name="Cherry J.M."/>
        </authorList>
    </citation>
    <scope>GENOME REANNOTATION</scope>
    <source>
        <strain>ATCC 204508 / S288c</strain>
    </source>
</reference>
<reference key="3">
    <citation type="journal article" date="2003" name="Genome Res.">
        <title>Systematic discovery of new genes in the Saccharomyces cerevisiae genome.</title>
        <authorList>
            <person name="Kessler M.M."/>
            <person name="Zeng Q."/>
            <person name="Hogan S."/>
            <person name="Cook R."/>
            <person name="Morales A.J."/>
            <person name="Cottarel G."/>
        </authorList>
    </citation>
    <scope>GENOME REANNOTATION</scope>
</reference>
<comment type="subcellular location">
    <subcellularLocation>
        <location evidence="2">Secreted</location>
    </subcellularLocation>
</comment>
<keyword id="KW-1185">Reference proteome</keyword>
<keyword id="KW-0964">Secreted</keyword>
<keyword id="KW-0732">Signal</keyword>
<protein>
    <recommendedName>
        <fullName>Uncharacterized protein YBR200W-A</fullName>
    </recommendedName>
</protein>